<organism>
    <name type="scientific">Canis lupus familiaris</name>
    <name type="common">Dog</name>
    <name type="synonym">Canis familiaris</name>
    <dbReference type="NCBI Taxonomy" id="9615"/>
    <lineage>
        <taxon>Eukaryota</taxon>
        <taxon>Metazoa</taxon>
        <taxon>Chordata</taxon>
        <taxon>Craniata</taxon>
        <taxon>Vertebrata</taxon>
        <taxon>Euteleostomi</taxon>
        <taxon>Mammalia</taxon>
        <taxon>Eutheria</taxon>
        <taxon>Laurasiatheria</taxon>
        <taxon>Carnivora</taxon>
        <taxon>Caniformia</taxon>
        <taxon>Canidae</taxon>
        <taxon>Canis</taxon>
    </lineage>
</organism>
<feature type="signal peptide" evidence="1">
    <location>
        <begin position="1"/>
        <end position="17"/>
    </location>
</feature>
<feature type="chain" id="PRO_0000015504" description="Interleukin-21">
    <location>
        <begin position="18"/>
        <end position="146"/>
    </location>
</feature>
<feature type="region of interest" description="Disordered" evidence="4">
    <location>
        <begin position="100"/>
        <end position="120"/>
    </location>
</feature>
<feature type="disulfide bond" evidence="3">
    <location>
        <begin position="64"/>
        <end position="115"/>
    </location>
</feature>
<feature type="disulfide bond" evidence="3">
    <location>
        <begin position="71"/>
        <end position="118"/>
    </location>
</feature>
<gene>
    <name type="primary">IL21</name>
</gene>
<dbReference type="EMBL" id="AB127975">
    <property type="protein sequence ID" value="BAD22569.1"/>
    <property type="molecule type" value="mRNA"/>
</dbReference>
<dbReference type="RefSeq" id="NP_001003347.1">
    <property type="nucleotide sequence ID" value="NM_001003347.1"/>
</dbReference>
<dbReference type="SMR" id="Q6L7I9"/>
<dbReference type="STRING" id="9615.ENSCAFP00000005939"/>
<dbReference type="PaxDb" id="9612-ENSCAFP00000005939"/>
<dbReference type="Ensembl" id="ENSCAFT00000006415.4">
    <property type="protein sequence ID" value="ENSCAFP00000005939.2"/>
    <property type="gene ID" value="ENSCAFG00000004004.4"/>
</dbReference>
<dbReference type="Ensembl" id="ENSCAFT00030011201.1">
    <property type="protein sequence ID" value="ENSCAFP00030009794.1"/>
    <property type="gene ID" value="ENSCAFG00030006099.1"/>
</dbReference>
<dbReference type="Ensembl" id="ENSCAFT00040023468.1">
    <property type="protein sequence ID" value="ENSCAFP00040020365.1"/>
    <property type="gene ID" value="ENSCAFG00040012716.1"/>
</dbReference>
<dbReference type="Ensembl" id="ENSCAFT00845035435.1">
    <property type="protein sequence ID" value="ENSCAFP00845027737.1"/>
    <property type="gene ID" value="ENSCAFG00845020106.1"/>
</dbReference>
<dbReference type="GeneID" id="442935"/>
<dbReference type="KEGG" id="cfa:442935"/>
<dbReference type="CTD" id="59067"/>
<dbReference type="VEuPathDB" id="HostDB:ENSCAFG00845020106"/>
<dbReference type="VGNC" id="VGNC:41967">
    <property type="gene designation" value="IL21"/>
</dbReference>
<dbReference type="eggNOG" id="ENOG502SES1">
    <property type="taxonomic scope" value="Eukaryota"/>
</dbReference>
<dbReference type="GeneTree" id="ENSGT00390000010494"/>
<dbReference type="HOGENOM" id="CLU_127182_1_0_1"/>
<dbReference type="InParanoid" id="Q6L7I9"/>
<dbReference type="OMA" id="MIHQHLR"/>
<dbReference type="OrthoDB" id="9426569at2759"/>
<dbReference type="TreeFam" id="TF336380"/>
<dbReference type="Reactome" id="R-CFA-9020958">
    <property type="pathway name" value="Interleukin-21 signaling"/>
</dbReference>
<dbReference type="Proteomes" id="UP000002254">
    <property type="component" value="Chromosome 19"/>
</dbReference>
<dbReference type="Proteomes" id="UP000694429">
    <property type="component" value="Chromosome 19"/>
</dbReference>
<dbReference type="Proteomes" id="UP000694542">
    <property type="component" value="Chromosome 19"/>
</dbReference>
<dbReference type="Proteomes" id="UP000805418">
    <property type="component" value="Chromosome 19"/>
</dbReference>
<dbReference type="Bgee" id="ENSCAFG00000004004">
    <property type="expression patterns" value="Expressed in lymph node and 4 other cell types or tissues"/>
</dbReference>
<dbReference type="GO" id="GO:0005615">
    <property type="term" value="C:extracellular space"/>
    <property type="evidence" value="ECO:0007669"/>
    <property type="project" value="UniProtKB-KW"/>
</dbReference>
<dbReference type="GO" id="GO:0005125">
    <property type="term" value="F:cytokine activity"/>
    <property type="evidence" value="ECO:0007669"/>
    <property type="project" value="UniProtKB-KW"/>
</dbReference>
<dbReference type="GO" id="GO:0005134">
    <property type="term" value="F:interleukin-2 receptor binding"/>
    <property type="evidence" value="ECO:0007669"/>
    <property type="project" value="Ensembl"/>
</dbReference>
<dbReference type="GO" id="GO:0048469">
    <property type="term" value="P:cell maturation"/>
    <property type="evidence" value="ECO:0007669"/>
    <property type="project" value="Ensembl"/>
</dbReference>
<dbReference type="GO" id="GO:0098586">
    <property type="term" value="P:cellular response to virus"/>
    <property type="evidence" value="ECO:0000250"/>
    <property type="project" value="UniProtKB"/>
</dbReference>
<dbReference type="GO" id="GO:0002314">
    <property type="term" value="P:germinal center B cell differentiation"/>
    <property type="evidence" value="ECO:0000250"/>
    <property type="project" value="UniProtKB"/>
</dbReference>
<dbReference type="GO" id="GO:0001779">
    <property type="term" value="P:natural killer cell differentiation"/>
    <property type="evidence" value="ECO:0007669"/>
    <property type="project" value="Ensembl"/>
</dbReference>
<dbReference type="GO" id="GO:0042267">
    <property type="term" value="P:natural killer cell mediated cytotoxicity"/>
    <property type="evidence" value="ECO:0007669"/>
    <property type="project" value="Ensembl"/>
</dbReference>
<dbReference type="GO" id="GO:0030890">
    <property type="term" value="P:positive regulation of B cell proliferation"/>
    <property type="evidence" value="ECO:0007669"/>
    <property type="project" value="Ensembl"/>
</dbReference>
<dbReference type="GO" id="GO:0001819">
    <property type="term" value="P:positive regulation of cytokine production"/>
    <property type="evidence" value="ECO:0000318"/>
    <property type="project" value="GO_Central"/>
</dbReference>
<dbReference type="GO" id="GO:0002639">
    <property type="term" value="P:positive regulation of immunoglobulin production"/>
    <property type="evidence" value="ECO:0000250"/>
    <property type="project" value="UniProtKB"/>
</dbReference>
<dbReference type="GO" id="GO:0032733">
    <property type="term" value="P:positive regulation of interleukin-10 production"/>
    <property type="evidence" value="ECO:0007669"/>
    <property type="project" value="Ensembl"/>
</dbReference>
<dbReference type="GO" id="GO:0032740">
    <property type="term" value="P:positive regulation of interleukin-17 production"/>
    <property type="evidence" value="ECO:0007669"/>
    <property type="project" value="Ensembl"/>
</dbReference>
<dbReference type="GO" id="GO:0002729">
    <property type="term" value="P:positive regulation of natural killer cell cytokine production"/>
    <property type="evidence" value="ECO:0007669"/>
    <property type="project" value="Ensembl"/>
</dbReference>
<dbReference type="GO" id="GO:0032825">
    <property type="term" value="P:positive regulation of natural killer cell differentiation"/>
    <property type="evidence" value="ECO:0007669"/>
    <property type="project" value="Ensembl"/>
</dbReference>
<dbReference type="GO" id="GO:0045954">
    <property type="term" value="P:positive regulation of natural killer cell mediated cytotoxicity"/>
    <property type="evidence" value="ECO:0000318"/>
    <property type="project" value="GO_Central"/>
</dbReference>
<dbReference type="GO" id="GO:0042102">
    <property type="term" value="P:positive regulation of T cell proliferation"/>
    <property type="evidence" value="ECO:0007669"/>
    <property type="project" value="Ensembl"/>
</dbReference>
<dbReference type="GO" id="GO:0032729">
    <property type="term" value="P:positive regulation of type II interferon production"/>
    <property type="evidence" value="ECO:0007669"/>
    <property type="project" value="Ensembl"/>
</dbReference>
<dbReference type="GO" id="GO:0061470">
    <property type="term" value="P:T follicular helper cell differentiation"/>
    <property type="evidence" value="ECO:0000250"/>
    <property type="project" value="UniProtKB"/>
</dbReference>
<dbReference type="Gene3D" id="1.20.1250.70">
    <property type="entry name" value="Interleukin-15/Interleukin-21"/>
    <property type="match status" value="1"/>
</dbReference>
<dbReference type="InterPro" id="IPR009079">
    <property type="entry name" value="4_helix_cytokine-like_core"/>
</dbReference>
<dbReference type="InterPro" id="IPR003443">
    <property type="entry name" value="IL-15/IL-21_fam"/>
</dbReference>
<dbReference type="PANTHER" id="PTHR14356">
    <property type="entry name" value="INTERLEUKIN-15-RELATED"/>
    <property type="match status" value="1"/>
</dbReference>
<dbReference type="PANTHER" id="PTHR14356:SF2">
    <property type="entry name" value="INTERLEUKIN-21"/>
    <property type="match status" value="1"/>
</dbReference>
<dbReference type="Pfam" id="PF02372">
    <property type="entry name" value="IL15"/>
    <property type="match status" value="1"/>
</dbReference>
<dbReference type="SUPFAM" id="SSF47266">
    <property type="entry name" value="4-helical cytokines"/>
    <property type="match status" value="1"/>
</dbReference>
<proteinExistence type="evidence at transcript level"/>
<name>IL21_CANLF</name>
<sequence>MEKIVICLMVIFLGTVAHKSSFQEQDLLLIRMRQLIDIVDQLKNYVNDLDPESLPAPEDVKRHCERSAFSCFQKVQLKAANTGGNEQIINVLTKQLKRKLPPTNAGRRQKHRPACPSCDSYEKAPPKEFLERLKSLIQKMIHQHLS</sequence>
<accession>Q6L7I9</accession>
<reference key="1">
    <citation type="submission" date="2003-12" db="EMBL/GenBank/DDBJ databases">
        <title>Molecular cloning of canine interleukin-21 cDNA.</title>
        <authorList>
            <person name="Miyake M."/>
            <person name="Saze K."/>
            <person name="Haga Y."/>
            <person name="Yamamoto Y."/>
            <person name="Iwabuchi S."/>
        </authorList>
    </citation>
    <scope>NUCLEOTIDE SEQUENCE [MRNA]</scope>
    <source>
        <tissue>Spleen</tissue>
    </source>
</reference>
<keyword id="KW-0202">Cytokine</keyword>
<keyword id="KW-1015">Disulfide bond</keyword>
<keyword id="KW-1185">Reference proteome</keyword>
<keyword id="KW-0964">Secreted</keyword>
<keyword id="KW-0732">Signal</keyword>
<protein>
    <recommendedName>
        <fullName>Interleukin-21</fullName>
        <shortName>IL-21</shortName>
    </recommendedName>
</protein>
<comment type="function">
    <text evidence="2 3">Cytokine with immunoregulatory activity. May promote the transition between innate and adaptive immunity. Induces the production of IgG(1) and IgG(3) in B-cells. Implicated in the generation and maintenance of T follicular helper (Tfh) cells and the formation of germinal-centers. Together with IL6, control the early generation of Tfh cells and are critical for an effective antibody response to acute viral infection (By similarity). May play a role in proliferation and maturation of natural killer (NK) cells in synergy with IL15. May regulate proliferation of mature B- and T-cells in response to activating stimuli. In synergy with IL15 and IL18 stimulates interferon gamma production in T-cells and NK cells (By similarity). During T-cell mediated immune response may inhibit dendritic cells (DC) activation and maturation (By similarity).</text>
</comment>
<comment type="subcellular location">
    <subcellularLocation>
        <location evidence="3">Secreted</location>
    </subcellularLocation>
</comment>
<comment type="similarity">
    <text evidence="5">Belongs to the IL-15/IL-21 family.</text>
</comment>
<evidence type="ECO:0000250" key="1">
    <source>
        <dbReference type="UniProtKB" id="Q76LU5"/>
    </source>
</evidence>
<evidence type="ECO:0000250" key="2">
    <source>
        <dbReference type="UniProtKB" id="Q9ES17"/>
    </source>
</evidence>
<evidence type="ECO:0000250" key="3">
    <source>
        <dbReference type="UniProtKB" id="Q9HBE4"/>
    </source>
</evidence>
<evidence type="ECO:0000256" key="4">
    <source>
        <dbReference type="SAM" id="MobiDB-lite"/>
    </source>
</evidence>
<evidence type="ECO:0000305" key="5"/>